<comment type="function">
    <text evidence="1">Catalyzes the methylation of C-1 in cobalt-precorrin-5B to form cobalt-precorrin-6A.</text>
</comment>
<comment type="catalytic activity">
    <reaction evidence="1">
        <text>Co-precorrin-5B + S-adenosyl-L-methionine = Co-precorrin-6A + S-adenosyl-L-homocysteine</text>
        <dbReference type="Rhea" id="RHEA:26285"/>
        <dbReference type="ChEBI" id="CHEBI:57856"/>
        <dbReference type="ChEBI" id="CHEBI:59789"/>
        <dbReference type="ChEBI" id="CHEBI:60063"/>
        <dbReference type="ChEBI" id="CHEBI:60064"/>
        <dbReference type="EC" id="2.1.1.195"/>
    </reaction>
</comment>
<comment type="pathway">
    <text evidence="1">Cofactor biosynthesis; adenosylcobalamin biosynthesis; cob(II)yrinate a,c-diamide from sirohydrochlorin (anaerobic route): step 6/10.</text>
</comment>
<comment type="similarity">
    <text evidence="1">Belongs to the CbiD family.</text>
</comment>
<organism>
    <name type="scientific">Brucella anthropi (strain ATCC 49188 / DSM 6882 / CCUG 24695 / JCM 21032 / LMG 3331 / NBRC 15819 / NCTC 12168 / Alc 37)</name>
    <name type="common">Ochrobactrum anthropi</name>
    <dbReference type="NCBI Taxonomy" id="439375"/>
    <lineage>
        <taxon>Bacteria</taxon>
        <taxon>Pseudomonadati</taxon>
        <taxon>Pseudomonadota</taxon>
        <taxon>Alphaproteobacteria</taxon>
        <taxon>Hyphomicrobiales</taxon>
        <taxon>Brucellaceae</taxon>
        <taxon>Brucella/Ochrobactrum group</taxon>
        <taxon>Brucella</taxon>
    </lineage>
</organism>
<dbReference type="EC" id="2.1.1.195" evidence="1"/>
<dbReference type="EMBL" id="CP000758">
    <property type="protein sequence ID" value="ABS14603.1"/>
    <property type="molecule type" value="Genomic_DNA"/>
</dbReference>
<dbReference type="RefSeq" id="WP_012091866.1">
    <property type="nucleotide sequence ID" value="NC_009667.1"/>
</dbReference>
<dbReference type="SMR" id="A6X049"/>
<dbReference type="STRING" id="439375.Oant_1887"/>
<dbReference type="KEGG" id="oan:Oant_1887"/>
<dbReference type="PATRIC" id="fig|439375.7.peg.1987"/>
<dbReference type="eggNOG" id="COG1903">
    <property type="taxonomic scope" value="Bacteria"/>
</dbReference>
<dbReference type="HOGENOM" id="CLU_041273_0_0_5"/>
<dbReference type="PhylomeDB" id="A6X049"/>
<dbReference type="UniPathway" id="UPA00148">
    <property type="reaction ID" value="UER00227"/>
</dbReference>
<dbReference type="Proteomes" id="UP000002301">
    <property type="component" value="Chromosome 1"/>
</dbReference>
<dbReference type="GO" id="GO:0043780">
    <property type="term" value="F:cobalt-precorrin-5B C1-methyltransferase activity"/>
    <property type="evidence" value="ECO:0007669"/>
    <property type="project" value="RHEA"/>
</dbReference>
<dbReference type="GO" id="GO:0019251">
    <property type="term" value="P:anaerobic cobalamin biosynthetic process"/>
    <property type="evidence" value="ECO:0007669"/>
    <property type="project" value="UniProtKB-UniRule"/>
</dbReference>
<dbReference type="GO" id="GO:0032259">
    <property type="term" value="P:methylation"/>
    <property type="evidence" value="ECO:0007669"/>
    <property type="project" value="UniProtKB-KW"/>
</dbReference>
<dbReference type="Gene3D" id="3.30.2110.10">
    <property type="entry name" value="CbiD-like"/>
    <property type="match status" value="1"/>
</dbReference>
<dbReference type="HAMAP" id="MF_00787">
    <property type="entry name" value="CbiD"/>
    <property type="match status" value="1"/>
</dbReference>
<dbReference type="InterPro" id="IPR002748">
    <property type="entry name" value="CbiD"/>
</dbReference>
<dbReference type="InterPro" id="IPR036074">
    <property type="entry name" value="CbiD_sf"/>
</dbReference>
<dbReference type="NCBIfam" id="TIGR00312">
    <property type="entry name" value="cbiD"/>
    <property type="match status" value="1"/>
</dbReference>
<dbReference type="NCBIfam" id="NF000849">
    <property type="entry name" value="PRK00075.1-1"/>
    <property type="match status" value="1"/>
</dbReference>
<dbReference type="PANTHER" id="PTHR35863">
    <property type="entry name" value="COBALT-PRECORRIN-5B C(1)-METHYLTRANSFERASE"/>
    <property type="match status" value="1"/>
</dbReference>
<dbReference type="PANTHER" id="PTHR35863:SF1">
    <property type="entry name" value="COBALT-PRECORRIN-5B C(1)-METHYLTRANSFERASE"/>
    <property type="match status" value="1"/>
</dbReference>
<dbReference type="Pfam" id="PF01888">
    <property type="entry name" value="CbiD"/>
    <property type="match status" value="1"/>
</dbReference>
<dbReference type="PIRSF" id="PIRSF026782">
    <property type="entry name" value="CbiD"/>
    <property type="match status" value="1"/>
</dbReference>
<dbReference type="SUPFAM" id="SSF111342">
    <property type="entry name" value="CbiD-like"/>
    <property type="match status" value="1"/>
</dbReference>
<accession>A6X049</accession>
<gene>
    <name evidence="1" type="primary">cbiD</name>
    <name type="ordered locus">Oant_1887</name>
</gene>
<reference key="1">
    <citation type="journal article" date="2011" name="J. Bacteriol.">
        <title>Genome of Ochrobactrum anthropi ATCC 49188 T, a versatile opportunistic pathogen and symbiont of several eukaryotic hosts.</title>
        <authorList>
            <person name="Chain P.S."/>
            <person name="Lang D.M."/>
            <person name="Comerci D.J."/>
            <person name="Malfatti S.A."/>
            <person name="Vergez L.M."/>
            <person name="Shin M."/>
            <person name="Ugalde R.A."/>
            <person name="Garcia E."/>
            <person name="Tolmasky M.E."/>
        </authorList>
    </citation>
    <scope>NUCLEOTIDE SEQUENCE [LARGE SCALE GENOMIC DNA]</scope>
    <source>
        <strain>ATCC 49188 / DSM 6882 / CCUG 24695 / JCM 21032 / LMG 3331 / NBRC 15819 / NCTC 12168 / Alc 37</strain>
    </source>
</reference>
<protein>
    <recommendedName>
        <fullName evidence="1">Cobalt-precorrin-5B C(1)-methyltransferase</fullName>
        <ecNumber evidence="1">2.1.1.195</ecNumber>
    </recommendedName>
    <alternativeName>
        <fullName evidence="1">Cobalt-precorrin-6A synthase</fullName>
    </alternativeName>
</protein>
<keyword id="KW-0169">Cobalamin biosynthesis</keyword>
<keyword id="KW-0489">Methyltransferase</keyword>
<keyword id="KW-1185">Reference proteome</keyword>
<keyword id="KW-0949">S-adenosyl-L-methionine</keyword>
<keyword id="KW-0808">Transferase</keyword>
<proteinExistence type="inferred from homology"/>
<name>CBID_BRUA4</name>
<sequence>MNDETAPTNKSQEKAELRRGWTTGACATAATKAALTALITGEFPDPVGIILPKGEVPYFQLAYEGLGDGYAMAGIVKDAGDDPDVTHGATIISTVFPAPPGTGVVFRAGEGVGTVTRPGLQIPPGEAAINPVPRRMMTEICEQICAEYGLPADIVITISVPGGEEIAKKTWNPRLGIVGGISILGTTGVVHPFSCSAWIHSIHRGIDVARAAGQKHVLGATGSTSEDAAQALYDLPDFAILDMGDFAGGVLKYLREHPIDKLTIAGGFAKLTKLAQGALDLHSSRSQVDKSFLWTLAEKAGAPESMKDQILFANTALEVLELTQSIGLDMATPIALKAKETALETLRGAPVAVEIIVTDRSGNILARV</sequence>
<evidence type="ECO:0000255" key="1">
    <source>
        <dbReference type="HAMAP-Rule" id="MF_00787"/>
    </source>
</evidence>
<feature type="chain" id="PRO_1000046868" description="Cobalt-precorrin-5B C(1)-methyltransferase">
    <location>
        <begin position="1"/>
        <end position="368"/>
    </location>
</feature>